<accession>B7KEP3</accession>
<evidence type="ECO:0000255" key="1">
    <source>
        <dbReference type="HAMAP-Rule" id="MF_01576"/>
    </source>
</evidence>
<comment type="function">
    <text evidence="1">Catalyzes the oxidation of 5,10-methylenetetrahydrofolate to 5,10-methenyltetrahydrofolate and then the hydrolysis of 5,10-methenyltetrahydrofolate to 10-formyltetrahydrofolate.</text>
</comment>
<comment type="catalytic activity">
    <reaction evidence="1">
        <text>(6R)-5,10-methylene-5,6,7,8-tetrahydrofolate + NADP(+) = (6R)-5,10-methenyltetrahydrofolate + NADPH</text>
        <dbReference type="Rhea" id="RHEA:22812"/>
        <dbReference type="ChEBI" id="CHEBI:15636"/>
        <dbReference type="ChEBI" id="CHEBI:57455"/>
        <dbReference type="ChEBI" id="CHEBI:57783"/>
        <dbReference type="ChEBI" id="CHEBI:58349"/>
        <dbReference type="EC" id="1.5.1.5"/>
    </reaction>
</comment>
<comment type="catalytic activity">
    <reaction evidence="1">
        <text>(6R)-5,10-methenyltetrahydrofolate + H2O = (6R)-10-formyltetrahydrofolate + H(+)</text>
        <dbReference type="Rhea" id="RHEA:23700"/>
        <dbReference type="ChEBI" id="CHEBI:15377"/>
        <dbReference type="ChEBI" id="CHEBI:15378"/>
        <dbReference type="ChEBI" id="CHEBI:57455"/>
        <dbReference type="ChEBI" id="CHEBI:195366"/>
        <dbReference type="EC" id="3.5.4.9"/>
    </reaction>
</comment>
<comment type="pathway">
    <text evidence="1">One-carbon metabolism; tetrahydrofolate interconversion.</text>
</comment>
<comment type="subunit">
    <text evidence="1">Homodimer.</text>
</comment>
<comment type="similarity">
    <text evidence="1">Belongs to the tetrahydrofolate dehydrogenase/cyclohydrolase family.</text>
</comment>
<feature type="chain" id="PRO_1000196761" description="Bifunctional protein FolD">
    <location>
        <begin position="1"/>
        <end position="301"/>
    </location>
</feature>
<feature type="binding site" evidence="1">
    <location>
        <begin position="169"/>
        <end position="171"/>
    </location>
    <ligand>
        <name>NADP(+)</name>
        <dbReference type="ChEBI" id="CHEBI:58349"/>
    </ligand>
</feature>
<feature type="binding site" evidence="1">
    <location>
        <position position="194"/>
    </location>
    <ligand>
        <name>NADP(+)</name>
        <dbReference type="ChEBI" id="CHEBI:58349"/>
    </ligand>
</feature>
<feature type="binding site" evidence="1">
    <location>
        <position position="235"/>
    </location>
    <ligand>
        <name>NADP(+)</name>
        <dbReference type="ChEBI" id="CHEBI:58349"/>
    </ligand>
</feature>
<keyword id="KW-0028">Amino-acid biosynthesis</keyword>
<keyword id="KW-0368">Histidine biosynthesis</keyword>
<keyword id="KW-0378">Hydrolase</keyword>
<keyword id="KW-0486">Methionine biosynthesis</keyword>
<keyword id="KW-0511">Multifunctional enzyme</keyword>
<keyword id="KW-0521">NADP</keyword>
<keyword id="KW-0554">One-carbon metabolism</keyword>
<keyword id="KW-0560">Oxidoreductase</keyword>
<keyword id="KW-0658">Purine biosynthesis</keyword>
<keyword id="KW-1185">Reference proteome</keyword>
<name>FOLD_GLOC7</name>
<gene>
    <name evidence="1" type="primary">folD</name>
    <name type="ordered locus">PCC7424_0607</name>
</gene>
<sequence>MVSQAAKILDGKALAQKIQLSLKEEIQTLQPKIGRPPGLAVLMVGDNPASAVYVRNKEKSCTKVGMASFGRHFPGETSQSELEQVIEELNQDSRVDGILIQLPLPDHLDGIALLHQINPEKDADGLHPTNLGRLVRGEPGLRSCTPAGVMALLEEYNLEVKGKHAVVIGRSILVGKPMGLMLLEENATVTIAHSLTQNLTELTRSADILVAAAGKANLITPEMVKPGAVVIDVGINRIEDESGKARLVGDVDYEGVAEVAQYITPVPGGIGPMTVAMLLSNTVYSYRQKEAGVERQKAGGN</sequence>
<reference key="1">
    <citation type="journal article" date="2011" name="MBio">
        <title>Novel metabolic attributes of the genus Cyanothece, comprising a group of unicellular nitrogen-fixing Cyanobacteria.</title>
        <authorList>
            <person name="Bandyopadhyay A."/>
            <person name="Elvitigala T."/>
            <person name="Welsh E."/>
            <person name="Stockel J."/>
            <person name="Liberton M."/>
            <person name="Min H."/>
            <person name="Sherman L.A."/>
            <person name="Pakrasi H.B."/>
        </authorList>
    </citation>
    <scope>NUCLEOTIDE SEQUENCE [LARGE SCALE GENOMIC DNA]</scope>
    <source>
        <strain>PCC 7424</strain>
    </source>
</reference>
<dbReference type="EC" id="1.5.1.5" evidence="1"/>
<dbReference type="EC" id="3.5.4.9" evidence="1"/>
<dbReference type="EMBL" id="CP001291">
    <property type="protein sequence ID" value="ACK69068.1"/>
    <property type="molecule type" value="Genomic_DNA"/>
</dbReference>
<dbReference type="RefSeq" id="WP_012598015.1">
    <property type="nucleotide sequence ID" value="NC_011729.1"/>
</dbReference>
<dbReference type="SMR" id="B7KEP3"/>
<dbReference type="STRING" id="65393.PCC7424_0607"/>
<dbReference type="KEGG" id="cyc:PCC7424_0607"/>
<dbReference type="eggNOG" id="COG0190">
    <property type="taxonomic scope" value="Bacteria"/>
</dbReference>
<dbReference type="HOGENOM" id="CLU_034045_2_1_3"/>
<dbReference type="OrthoDB" id="9803580at2"/>
<dbReference type="UniPathway" id="UPA00193"/>
<dbReference type="Proteomes" id="UP000002384">
    <property type="component" value="Chromosome"/>
</dbReference>
<dbReference type="GO" id="GO:0005829">
    <property type="term" value="C:cytosol"/>
    <property type="evidence" value="ECO:0007669"/>
    <property type="project" value="TreeGrafter"/>
</dbReference>
<dbReference type="GO" id="GO:0004477">
    <property type="term" value="F:methenyltetrahydrofolate cyclohydrolase activity"/>
    <property type="evidence" value="ECO:0007669"/>
    <property type="project" value="UniProtKB-UniRule"/>
</dbReference>
<dbReference type="GO" id="GO:0004488">
    <property type="term" value="F:methylenetetrahydrofolate dehydrogenase (NADP+) activity"/>
    <property type="evidence" value="ECO:0007669"/>
    <property type="project" value="UniProtKB-UniRule"/>
</dbReference>
<dbReference type="GO" id="GO:0000105">
    <property type="term" value="P:L-histidine biosynthetic process"/>
    <property type="evidence" value="ECO:0007669"/>
    <property type="project" value="UniProtKB-KW"/>
</dbReference>
<dbReference type="GO" id="GO:0009086">
    <property type="term" value="P:methionine biosynthetic process"/>
    <property type="evidence" value="ECO:0007669"/>
    <property type="project" value="UniProtKB-KW"/>
</dbReference>
<dbReference type="GO" id="GO:0006164">
    <property type="term" value="P:purine nucleotide biosynthetic process"/>
    <property type="evidence" value="ECO:0007669"/>
    <property type="project" value="UniProtKB-KW"/>
</dbReference>
<dbReference type="GO" id="GO:0035999">
    <property type="term" value="P:tetrahydrofolate interconversion"/>
    <property type="evidence" value="ECO:0007669"/>
    <property type="project" value="UniProtKB-UniRule"/>
</dbReference>
<dbReference type="CDD" id="cd01080">
    <property type="entry name" value="NAD_bind_m-THF_DH_Cyclohyd"/>
    <property type="match status" value="1"/>
</dbReference>
<dbReference type="FunFam" id="3.40.50.720:FF:000006">
    <property type="entry name" value="Bifunctional protein FolD"/>
    <property type="match status" value="1"/>
</dbReference>
<dbReference type="FunFam" id="3.40.50.10860:FF:000005">
    <property type="entry name" value="C-1-tetrahydrofolate synthase, cytoplasmic, putative"/>
    <property type="match status" value="1"/>
</dbReference>
<dbReference type="Gene3D" id="3.40.50.10860">
    <property type="entry name" value="Leucine Dehydrogenase, chain A, domain 1"/>
    <property type="match status" value="1"/>
</dbReference>
<dbReference type="Gene3D" id="3.40.50.720">
    <property type="entry name" value="NAD(P)-binding Rossmann-like Domain"/>
    <property type="match status" value="1"/>
</dbReference>
<dbReference type="HAMAP" id="MF_01576">
    <property type="entry name" value="THF_DHG_CYH"/>
    <property type="match status" value="1"/>
</dbReference>
<dbReference type="InterPro" id="IPR046346">
    <property type="entry name" value="Aminoacid_DH-like_N_sf"/>
</dbReference>
<dbReference type="InterPro" id="IPR036291">
    <property type="entry name" value="NAD(P)-bd_dom_sf"/>
</dbReference>
<dbReference type="InterPro" id="IPR000672">
    <property type="entry name" value="THF_DH/CycHdrlase"/>
</dbReference>
<dbReference type="InterPro" id="IPR020630">
    <property type="entry name" value="THF_DH/CycHdrlase_cat_dom"/>
</dbReference>
<dbReference type="InterPro" id="IPR020867">
    <property type="entry name" value="THF_DH/CycHdrlase_CS"/>
</dbReference>
<dbReference type="InterPro" id="IPR020631">
    <property type="entry name" value="THF_DH/CycHdrlase_NAD-bd_dom"/>
</dbReference>
<dbReference type="NCBIfam" id="NF008058">
    <property type="entry name" value="PRK10792.1"/>
    <property type="match status" value="1"/>
</dbReference>
<dbReference type="NCBIfam" id="NF010783">
    <property type="entry name" value="PRK14186.1"/>
    <property type="match status" value="1"/>
</dbReference>
<dbReference type="PANTHER" id="PTHR48099:SF5">
    <property type="entry name" value="C-1-TETRAHYDROFOLATE SYNTHASE, CYTOPLASMIC"/>
    <property type="match status" value="1"/>
</dbReference>
<dbReference type="PANTHER" id="PTHR48099">
    <property type="entry name" value="C-1-TETRAHYDROFOLATE SYNTHASE, CYTOPLASMIC-RELATED"/>
    <property type="match status" value="1"/>
</dbReference>
<dbReference type="Pfam" id="PF00763">
    <property type="entry name" value="THF_DHG_CYH"/>
    <property type="match status" value="1"/>
</dbReference>
<dbReference type="Pfam" id="PF02882">
    <property type="entry name" value="THF_DHG_CYH_C"/>
    <property type="match status" value="1"/>
</dbReference>
<dbReference type="PRINTS" id="PR00085">
    <property type="entry name" value="THFDHDRGNASE"/>
</dbReference>
<dbReference type="SUPFAM" id="SSF53223">
    <property type="entry name" value="Aminoacid dehydrogenase-like, N-terminal domain"/>
    <property type="match status" value="1"/>
</dbReference>
<dbReference type="SUPFAM" id="SSF51735">
    <property type="entry name" value="NAD(P)-binding Rossmann-fold domains"/>
    <property type="match status" value="1"/>
</dbReference>
<dbReference type="PROSITE" id="PS00767">
    <property type="entry name" value="THF_DHG_CYH_2"/>
    <property type="match status" value="1"/>
</dbReference>
<organism>
    <name type="scientific">Gloeothece citriformis (strain PCC 7424)</name>
    <name type="common">Cyanothece sp. (strain PCC 7424)</name>
    <dbReference type="NCBI Taxonomy" id="65393"/>
    <lineage>
        <taxon>Bacteria</taxon>
        <taxon>Bacillati</taxon>
        <taxon>Cyanobacteriota</taxon>
        <taxon>Cyanophyceae</taxon>
        <taxon>Oscillatoriophycideae</taxon>
        <taxon>Chroococcales</taxon>
        <taxon>Aphanothecaceae</taxon>
        <taxon>Gloeothece</taxon>
        <taxon>Gloeothece citriformis</taxon>
    </lineage>
</organism>
<protein>
    <recommendedName>
        <fullName evidence="1">Bifunctional protein FolD</fullName>
    </recommendedName>
    <domain>
        <recommendedName>
            <fullName evidence="1">Methylenetetrahydrofolate dehydrogenase</fullName>
            <ecNumber evidence="1">1.5.1.5</ecNumber>
        </recommendedName>
    </domain>
    <domain>
        <recommendedName>
            <fullName evidence="1">Methenyltetrahydrofolate cyclohydrolase</fullName>
            <ecNumber evidence="1">3.5.4.9</ecNumber>
        </recommendedName>
    </domain>
</protein>
<proteinExistence type="inferred from homology"/>